<evidence type="ECO:0000255" key="1">
    <source>
        <dbReference type="HAMAP-Rule" id="MF_01108"/>
    </source>
</evidence>
<feature type="chain" id="PRO_1000137068" description="Acetylornithine deacetylase">
    <location>
        <begin position="1"/>
        <end position="383"/>
    </location>
</feature>
<feature type="active site" evidence="1">
    <location>
        <position position="82"/>
    </location>
</feature>
<feature type="active site" evidence="1">
    <location>
        <position position="144"/>
    </location>
</feature>
<feature type="binding site" evidence="1">
    <location>
        <position position="80"/>
    </location>
    <ligand>
        <name>Zn(2+)</name>
        <dbReference type="ChEBI" id="CHEBI:29105"/>
        <label>1</label>
    </ligand>
</feature>
<feature type="binding site" evidence="1">
    <location>
        <position position="112"/>
    </location>
    <ligand>
        <name>Zn(2+)</name>
        <dbReference type="ChEBI" id="CHEBI:29105"/>
        <label>1</label>
    </ligand>
</feature>
<feature type="binding site" evidence="1">
    <location>
        <position position="112"/>
    </location>
    <ligand>
        <name>Zn(2+)</name>
        <dbReference type="ChEBI" id="CHEBI:29105"/>
        <label>2</label>
    </ligand>
</feature>
<feature type="binding site" evidence="1">
    <location>
        <position position="145"/>
    </location>
    <ligand>
        <name>Zn(2+)</name>
        <dbReference type="ChEBI" id="CHEBI:29105"/>
        <label>2</label>
    </ligand>
</feature>
<feature type="binding site" evidence="1">
    <location>
        <position position="169"/>
    </location>
    <ligand>
        <name>Zn(2+)</name>
        <dbReference type="ChEBI" id="CHEBI:29105"/>
        <label>1</label>
    </ligand>
</feature>
<feature type="binding site" evidence="1">
    <location>
        <position position="355"/>
    </location>
    <ligand>
        <name>Zn(2+)</name>
        <dbReference type="ChEBI" id="CHEBI:29105"/>
        <label>2</label>
    </ligand>
</feature>
<organism>
    <name type="scientific">Escherichia coli (strain SMS-3-5 / SECEC)</name>
    <dbReference type="NCBI Taxonomy" id="439855"/>
    <lineage>
        <taxon>Bacteria</taxon>
        <taxon>Pseudomonadati</taxon>
        <taxon>Pseudomonadota</taxon>
        <taxon>Gammaproteobacteria</taxon>
        <taxon>Enterobacterales</taxon>
        <taxon>Enterobacteriaceae</taxon>
        <taxon>Escherichia</taxon>
    </lineage>
</organism>
<name>ARGE_ECOSM</name>
<keyword id="KW-0028">Amino-acid biosynthesis</keyword>
<keyword id="KW-0055">Arginine biosynthesis</keyword>
<keyword id="KW-0170">Cobalt</keyword>
<keyword id="KW-0963">Cytoplasm</keyword>
<keyword id="KW-0378">Hydrolase</keyword>
<keyword id="KW-0479">Metal-binding</keyword>
<keyword id="KW-0862">Zinc</keyword>
<dbReference type="EC" id="3.5.1.16" evidence="1"/>
<dbReference type="EMBL" id="CP000970">
    <property type="protein sequence ID" value="ACB16044.1"/>
    <property type="molecule type" value="Genomic_DNA"/>
</dbReference>
<dbReference type="RefSeq" id="WP_001361903.1">
    <property type="nucleotide sequence ID" value="NC_010498.1"/>
</dbReference>
<dbReference type="SMR" id="B1LNR7"/>
<dbReference type="MEROPS" id="M20.974"/>
<dbReference type="KEGG" id="ecm:EcSMS35_4404"/>
<dbReference type="HOGENOM" id="CLU_021802_2_4_6"/>
<dbReference type="UniPathway" id="UPA00068">
    <property type="reaction ID" value="UER00110"/>
</dbReference>
<dbReference type="Proteomes" id="UP000007011">
    <property type="component" value="Chromosome"/>
</dbReference>
<dbReference type="GO" id="GO:0005737">
    <property type="term" value="C:cytoplasm"/>
    <property type="evidence" value="ECO:0007669"/>
    <property type="project" value="UniProtKB-SubCell"/>
</dbReference>
<dbReference type="GO" id="GO:0008777">
    <property type="term" value="F:acetylornithine deacetylase activity"/>
    <property type="evidence" value="ECO:0007669"/>
    <property type="project" value="UniProtKB-UniRule"/>
</dbReference>
<dbReference type="GO" id="GO:0008270">
    <property type="term" value="F:zinc ion binding"/>
    <property type="evidence" value="ECO:0007669"/>
    <property type="project" value="UniProtKB-UniRule"/>
</dbReference>
<dbReference type="GO" id="GO:0006526">
    <property type="term" value="P:L-arginine biosynthetic process"/>
    <property type="evidence" value="ECO:0007669"/>
    <property type="project" value="UniProtKB-UniRule"/>
</dbReference>
<dbReference type="CDD" id="cd03894">
    <property type="entry name" value="M20_ArgE"/>
    <property type="match status" value="1"/>
</dbReference>
<dbReference type="FunFam" id="3.30.70.360:FF:000003">
    <property type="entry name" value="Acetylornithine deacetylase"/>
    <property type="match status" value="1"/>
</dbReference>
<dbReference type="Gene3D" id="3.30.70.360">
    <property type="match status" value="1"/>
</dbReference>
<dbReference type="Gene3D" id="3.40.630.10">
    <property type="entry name" value="Zn peptidases"/>
    <property type="match status" value="1"/>
</dbReference>
<dbReference type="HAMAP" id="MF_01108">
    <property type="entry name" value="ArgE"/>
    <property type="match status" value="1"/>
</dbReference>
<dbReference type="InterPro" id="IPR010169">
    <property type="entry name" value="AcOrn-deacetyl"/>
</dbReference>
<dbReference type="InterPro" id="IPR001261">
    <property type="entry name" value="ArgE/DapE_CS"/>
</dbReference>
<dbReference type="InterPro" id="IPR036264">
    <property type="entry name" value="Bact_exopeptidase_dim_dom"/>
</dbReference>
<dbReference type="InterPro" id="IPR002933">
    <property type="entry name" value="Peptidase_M20"/>
</dbReference>
<dbReference type="InterPro" id="IPR011650">
    <property type="entry name" value="Peptidase_M20_dimer"/>
</dbReference>
<dbReference type="InterPro" id="IPR050072">
    <property type="entry name" value="Peptidase_M20A"/>
</dbReference>
<dbReference type="NCBIfam" id="TIGR01892">
    <property type="entry name" value="AcOrn-deacetyl"/>
    <property type="match status" value="1"/>
</dbReference>
<dbReference type="NCBIfam" id="NF003474">
    <property type="entry name" value="PRK05111.1"/>
    <property type="match status" value="1"/>
</dbReference>
<dbReference type="PANTHER" id="PTHR43808">
    <property type="entry name" value="ACETYLORNITHINE DEACETYLASE"/>
    <property type="match status" value="1"/>
</dbReference>
<dbReference type="PANTHER" id="PTHR43808:SF1">
    <property type="entry name" value="ACETYLORNITHINE DEACETYLASE"/>
    <property type="match status" value="1"/>
</dbReference>
<dbReference type="Pfam" id="PF07687">
    <property type="entry name" value="M20_dimer"/>
    <property type="match status" value="1"/>
</dbReference>
<dbReference type="Pfam" id="PF01546">
    <property type="entry name" value="Peptidase_M20"/>
    <property type="match status" value="1"/>
</dbReference>
<dbReference type="SUPFAM" id="SSF55031">
    <property type="entry name" value="Bacterial exopeptidase dimerisation domain"/>
    <property type="match status" value="1"/>
</dbReference>
<dbReference type="SUPFAM" id="SSF53187">
    <property type="entry name" value="Zn-dependent exopeptidases"/>
    <property type="match status" value="1"/>
</dbReference>
<dbReference type="PROSITE" id="PS00758">
    <property type="entry name" value="ARGE_DAPE_CPG2_1"/>
    <property type="match status" value="1"/>
</dbReference>
<dbReference type="PROSITE" id="PS00759">
    <property type="entry name" value="ARGE_DAPE_CPG2_2"/>
    <property type="match status" value="1"/>
</dbReference>
<proteinExistence type="inferred from homology"/>
<sequence length="383" mass="42292">MKNKLPPFIEIYRALIATPSISATEEALDQSNADLITLLADWFKDLGFNVEVQPVPGTRNKFNMLASTGQGAGGLLLAGHTDTVPFDDGRWTRDPFTLTEHDGKLYGLGTADMKGFFAFILDALRDVDVTKLAKPLYILATADEETSMAGARYFAETTALRPDCAIIGEPTSLQPVRAHKGHISNAIRIQGQSGHSSDPARGVNAIELMHDAIGHILQLRDKLKERYHYEAFTVPYPTLNLGHIHGGDASNRICACCELHMDIRPLPGMTLNELNGLLNDALAPVSERWPGRLTVDELHPPIPGYECPPNHQLVEVVEKLLGAKTEVVNYCTEAPFIQTLCPTLVLGPGSINQAHQPDEYLETRFIKPTRELITQVIHHFCWH</sequence>
<gene>
    <name evidence="1" type="primary">argE</name>
    <name type="ordered locus">EcSMS35_4404</name>
</gene>
<reference key="1">
    <citation type="journal article" date="2008" name="J. Bacteriol.">
        <title>Insights into the environmental resistance gene pool from the genome sequence of the multidrug-resistant environmental isolate Escherichia coli SMS-3-5.</title>
        <authorList>
            <person name="Fricke W.F."/>
            <person name="Wright M.S."/>
            <person name="Lindell A.H."/>
            <person name="Harkins D.M."/>
            <person name="Baker-Austin C."/>
            <person name="Ravel J."/>
            <person name="Stepanauskas R."/>
        </authorList>
    </citation>
    <scope>NUCLEOTIDE SEQUENCE [LARGE SCALE GENOMIC DNA]</scope>
    <source>
        <strain>SMS-3-5 / SECEC</strain>
    </source>
</reference>
<accession>B1LNR7</accession>
<protein>
    <recommendedName>
        <fullName evidence="1">Acetylornithine deacetylase</fullName>
        <shortName evidence="1">AO</shortName>
        <shortName evidence="1">Acetylornithinase</shortName>
        <ecNumber evidence="1">3.5.1.16</ecNumber>
    </recommendedName>
    <alternativeName>
        <fullName evidence="1">N-acetylornithinase</fullName>
        <shortName evidence="1">NAO</shortName>
    </alternativeName>
</protein>
<comment type="function">
    <text evidence="1">Catalyzes the hydrolysis of the amide bond of N(2)-acetylated L-amino acids. Cleaves the acetyl group from N-acetyl-L-ornithine to form L-ornithine, an intermediate in L-arginine biosynthesis pathway, and a branchpoint in the synthesis of polyamines.</text>
</comment>
<comment type="catalytic activity">
    <reaction evidence="1">
        <text>N(2)-acetyl-L-ornithine + H2O = L-ornithine + acetate</text>
        <dbReference type="Rhea" id="RHEA:15941"/>
        <dbReference type="ChEBI" id="CHEBI:15377"/>
        <dbReference type="ChEBI" id="CHEBI:30089"/>
        <dbReference type="ChEBI" id="CHEBI:46911"/>
        <dbReference type="ChEBI" id="CHEBI:57805"/>
        <dbReference type="EC" id="3.5.1.16"/>
    </reaction>
</comment>
<comment type="cofactor">
    <cofactor evidence="1">
        <name>Zn(2+)</name>
        <dbReference type="ChEBI" id="CHEBI:29105"/>
    </cofactor>
    <cofactor evidence="1">
        <name>Co(2+)</name>
        <dbReference type="ChEBI" id="CHEBI:48828"/>
    </cofactor>
    <text evidence="1">Binds 2 Zn(2+) or Co(2+) ions per subunit.</text>
</comment>
<comment type="cofactor">
    <cofactor evidence="1">
        <name>glutathione</name>
        <dbReference type="ChEBI" id="CHEBI:57925"/>
    </cofactor>
</comment>
<comment type="pathway">
    <text evidence="1">Amino-acid biosynthesis; L-arginine biosynthesis; L-ornithine from N(2)-acetyl-L-ornithine (linear): step 1/1.</text>
</comment>
<comment type="subunit">
    <text evidence="1">Homodimer.</text>
</comment>
<comment type="subcellular location">
    <subcellularLocation>
        <location evidence="1">Cytoplasm</location>
    </subcellularLocation>
</comment>
<comment type="similarity">
    <text evidence="1">Belongs to the peptidase M20A family. ArgE subfamily.</text>
</comment>